<evidence type="ECO:0000305" key="1"/>
<evidence type="ECO:0007829" key="2">
    <source>
        <dbReference type="PDB" id="2N7H"/>
    </source>
</evidence>
<evidence type="ECO:0007829" key="3">
    <source>
        <dbReference type="PDB" id="4DWH"/>
    </source>
</evidence>
<evidence type="ECO:0007829" key="4">
    <source>
        <dbReference type="PDB" id="5NKT"/>
    </source>
</evidence>
<evidence type="ECO:0007829" key="5">
    <source>
        <dbReference type="PDB" id="6S09"/>
    </source>
</evidence>
<evidence type="ECO:0007829" key="6">
    <source>
        <dbReference type="PDB" id="6SWH"/>
    </source>
</evidence>
<evidence type="ECO:0007829" key="7">
    <source>
        <dbReference type="PDB" id="8PTU"/>
    </source>
</evidence>
<gene>
    <name type="primary">fimA</name>
    <name type="synonym">pilA</name>
    <name type="ordered locus">b4314</name>
    <name type="ordered locus">JW4277</name>
</gene>
<feature type="signal peptide">
    <location>
        <begin position="1"/>
        <end position="23"/>
    </location>
</feature>
<feature type="chain" id="PRO_0000009170" description="Type-1 fimbrial protein, A chain">
    <location>
        <begin position="24"/>
        <end position="182"/>
    </location>
</feature>
<feature type="disulfide bond" evidence="1">
    <location>
        <begin position="44"/>
        <end position="84"/>
    </location>
</feature>
<feature type="sequence conflict" description="In Ref. 1; AAA24389." evidence="1" ref="1">
    <original>A</original>
    <variation>T</variation>
    <location>
        <position position="20"/>
    </location>
</feature>
<feature type="sequence conflict" description="In Ref. 2; CAA25489." evidence="1" ref="2">
    <location>
        <position position="163"/>
    </location>
</feature>
<feature type="strand" evidence="4">
    <location>
        <begin position="31"/>
        <end position="37"/>
    </location>
</feature>
<feature type="strand" evidence="4">
    <location>
        <begin position="42"/>
        <end position="46"/>
    </location>
</feature>
<feature type="turn" evidence="4">
    <location>
        <begin position="48"/>
        <end position="51"/>
    </location>
</feature>
<feature type="strand" evidence="4">
    <location>
        <begin position="52"/>
        <end position="58"/>
    </location>
</feature>
<feature type="strand" evidence="5">
    <location>
        <begin position="59"/>
        <end position="61"/>
    </location>
</feature>
<feature type="helix" evidence="4">
    <location>
        <begin position="62"/>
        <end position="65"/>
    </location>
</feature>
<feature type="strand" evidence="3">
    <location>
        <begin position="67"/>
        <end position="71"/>
    </location>
</feature>
<feature type="strand" evidence="4">
    <location>
        <begin position="75"/>
        <end position="84"/>
    </location>
</feature>
<feature type="turn" evidence="4">
    <location>
        <begin position="86"/>
        <end position="88"/>
    </location>
</feature>
<feature type="strand" evidence="4">
    <location>
        <begin position="90"/>
        <end position="97"/>
    </location>
</feature>
<feature type="strand" evidence="4">
    <location>
        <begin position="100"/>
        <end position="102"/>
    </location>
</feature>
<feature type="strand" evidence="5">
    <location>
        <begin position="105"/>
        <end position="109"/>
    </location>
</feature>
<feature type="strand" evidence="7">
    <location>
        <begin position="115"/>
        <end position="118"/>
    </location>
</feature>
<feature type="strand" evidence="4">
    <location>
        <begin position="120"/>
        <end position="127"/>
    </location>
</feature>
<feature type="strand" evidence="2">
    <location>
        <begin position="131"/>
        <end position="134"/>
    </location>
</feature>
<feature type="strand" evidence="4">
    <location>
        <begin position="137"/>
        <end position="141"/>
    </location>
</feature>
<feature type="strand" evidence="4">
    <location>
        <begin position="149"/>
        <end position="167"/>
    </location>
</feature>
<feature type="strand" evidence="6">
    <location>
        <begin position="168"/>
        <end position="170"/>
    </location>
</feature>
<feature type="strand" evidence="4">
    <location>
        <begin position="172"/>
        <end position="181"/>
    </location>
</feature>
<protein>
    <recommendedName>
        <fullName>Type-1 fimbrial protein, A chain</fullName>
    </recommendedName>
    <alternativeName>
        <fullName>Type-1A pilin</fullName>
    </alternativeName>
</protein>
<organism>
    <name type="scientific">Escherichia coli (strain K12)</name>
    <dbReference type="NCBI Taxonomy" id="83333"/>
    <lineage>
        <taxon>Bacteria</taxon>
        <taxon>Pseudomonadati</taxon>
        <taxon>Pseudomonadota</taxon>
        <taxon>Gammaproteobacteria</taxon>
        <taxon>Enterobacterales</taxon>
        <taxon>Enterobacteriaceae</taxon>
        <taxon>Escherichia</taxon>
    </lineage>
</organism>
<dbReference type="EMBL" id="X00981">
    <property type="protein sequence ID" value="CAA25489.1"/>
    <property type="molecule type" value="Genomic_DNA"/>
</dbReference>
<dbReference type="EMBL" id="M27603">
    <property type="protein sequence ID" value="AAA24389.1"/>
    <property type="molecule type" value="Genomic_DNA"/>
</dbReference>
<dbReference type="EMBL" id="U14003">
    <property type="protein sequence ID" value="AAA97210.1"/>
    <property type="molecule type" value="Genomic_DNA"/>
</dbReference>
<dbReference type="EMBL" id="U00096">
    <property type="protein sequence ID" value="AAC77270.1"/>
    <property type="molecule type" value="Genomic_DNA"/>
</dbReference>
<dbReference type="EMBL" id="AP009048">
    <property type="protein sequence ID" value="BAE78307.1"/>
    <property type="molecule type" value="Genomic_DNA"/>
</dbReference>
<dbReference type="PIR" id="S56539">
    <property type="entry name" value="YQECT1"/>
</dbReference>
<dbReference type="RefSeq" id="NP_418734.1">
    <property type="nucleotide sequence ID" value="NC_000913.3"/>
</dbReference>
<dbReference type="RefSeq" id="WP_000695564.1">
    <property type="nucleotide sequence ID" value="NZ_LN832404.1"/>
</dbReference>
<dbReference type="PDB" id="2JTY">
    <property type="method" value="NMR"/>
    <property type="chains" value="A=24-182"/>
</dbReference>
<dbReference type="PDB" id="2M5G">
    <property type="method" value="NMR"/>
    <property type="chains" value="A=24-182"/>
</dbReference>
<dbReference type="PDB" id="2N7H">
    <property type="method" value="NMR"/>
    <property type="chains" value="A/B/C/D/E/F=24-182"/>
</dbReference>
<dbReference type="PDB" id="3SQB">
    <property type="method" value="X-ray"/>
    <property type="resolution" value="3.20 A"/>
    <property type="chains" value="B/D/F/H=37-182"/>
</dbReference>
<dbReference type="PDB" id="4DWH">
    <property type="method" value="X-ray"/>
    <property type="resolution" value="2.50 A"/>
    <property type="chains" value="B/D=41-182"/>
</dbReference>
<dbReference type="PDB" id="5NKT">
    <property type="method" value="X-ray"/>
    <property type="resolution" value="1.50 A"/>
    <property type="chains" value="A=24-182"/>
</dbReference>
<dbReference type="PDB" id="5OH0">
    <property type="method" value="EM"/>
    <property type="resolution" value="4.20 A"/>
    <property type="chains" value="A/B/C/D/E/F=24-182"/>
</dbReference>
<dbReference type="PDB" id="6C53">
    <property type="method" value="EM"/>
    <property type="resolution" value="4.20 A"/>
    <property type="chains" value="A/B/C/D/E/F/G/H/I/J/K=24-182"/>
</dbReference>
<dbReference type="PDB" id="6R74">
    <property type="method" value="X-ray"/>
    <property type="resolution" value="1.81 A"/>
    <property type="chains" value="A=42-182"/>
</dbReference>
<dbReference type="PDB" id="6R7E">
    <property type="method" value="X-ray"/>
    <property type="resolution" value="1.79 A"/>
    <property type="chains" value="A=31-182"/>
</dbReference>
<dbReference type="PDB" id="6S09">
    <property type="method" value="X-ray"/>
    <property type="resolution" value="1.50 A"/>
    <property type="chains" value="A/B/C/D/E/F/G/H=42-182"/>
</dbReference>
<dbReference type="PDB" id="6SWH">
    <property type="method" value="X-ray"/>
    <property type="resolution" value="2.80 A"/>
    <property type="chains" value="C/F=37-182"/>
</dbReference>
<dbReference type="PDB" id="6Y7S">
    <property type="method" value="EM"/>
    <property type="resolution" value="2.80 A"/>
    <property type="chains" value="A/B/C/D/E/F=1-182"/>
</dbReference>
<dbReference type="PDB" id="8PSV">
    <property type="method" value="EM"/>
    <property type="resolution" value="2.70 A"/>
    <property type="chains" value="A/B/C/D/E/F=1-182"/>
</dbReference>
<dbReference type="PDB" id="8PTU">
    <property type="method" value="EM"/>
    <property type="resolution" value="2.52 A"/>
    <property type="chains" value="A/B/C/D/E/F=1-182"/>
</dbReference>
<dbReference type="PDBsum" id="2JTY"/>
<dbReference type="PDBsum" id="2M5G"/>
<dbReference type="PDBsum" id="2N7H"/>
<dbReference type="PDBsum" id="3SQB"/>
<dbReference type="PDBsum" id="4DWH"/>
<dbReference type="PDBsum" id="5NKT"/>
<dbReference type="PDBsum" id="5OH0"/>
<dbReference type="PDBsum" id="6C53"/>
<dbReference type="PDBsum" id="6R74"/>
<dbReference type="PDBsum" id="6R7E"/>
<dbReference type="PDBsum" id="6S09"/>
<dbReference type="PDBsum" id="6SWH"/>
<dbReference type="PDBsum" id="6Y7S"/>
<dbReference type="PDBsum" id="8PSV"/>
<dbReference type="PDBsum" id="8PTU"/>
<dbReference type="BMRB" id="P04128"/>
<dbReference type="EMDB" id="EMD-10721"/>
<dbReference type="EMDB" id="EMD-17863"/>
<dbReference type="EMDB" id="EMD-17878"/>
<dbReference type="EMDB" id="EMD-3809"/>
<dbReference type="EMDB" id="EMD-7342"/>
<dbReference type="SMR" id="P04128"/>
<dbReference type="BioGRID" id="4262746">
    <property type="interactions" value="9"/>
</dbReference>
<dbReference type="DIP" id="DIP-9609N"/>
<dbReference type="FunCoup" id="P04128">
    <property type="interactions" value="90"/>
</dbReference>
<dbReference type="IntAct" id="P04128">
    <property type="interactions" value="2"/>
</dbReference>
<dbReference type="STRING" id="511145.b4314"/>
<dbReference type="jPOST" id="P04128"/>
<dbReference type="PaxDb" id="511145-b4314"/>
<dbReference type="EnsemblBacteria" id="AAC77270">
    <property type="protein sequence ID" value="AAC77270"/>
    <property type="gene ID" value="b4314"/>
</dbReference>
<dbReference type="GeneID" id="948838"/>
<dbReference type="KEGG" id="ecj:JW4277"/>
<dbReference type="KEGG" id="eco:b4314"/>
<dbReference type="KEGG" id="ecoc:C3026_23305"/>
<dbReference type="PATRIC" id="fig|1411691.4.peg.2378"/>
<dbReference type="EchoBASE" id="EB0304"/>
<dbReference type="eggNOG" id="COG3539">
    <property type="taxonomic scope" value="Bacteria"/>
</dbReference>
<dbReference type="HOGENOM" id="CLU_088965_0_0_6"/>
<dbReference type="InParanoid" id="P04128"/>
<dbReference type="OMA" id="GACTIAP"/>
<dbReference type="OrthoDB" id="6556331at2"/>
<dbReference type="PhylomeDB" id="P04128"/>
<dbReference type="BioCyc" id="EcoCyc:EG10308-MONOMER"/>
<dbReference type="EvolutionaryTrace" id="P04128"/>
<dbReference type="PRO" id="PR:P04128"/>
<dbReference type="Proteomes" id="UP000000625">
    <property type="component" value="Chromosome"/>
</dbReference>
<dbReference type="GO" id="GO:0009289">
    <property type="term" value="C:pilus"/>
    <property type="evidence" value="ECO:0000318"/>
    <property type="project" value="GO_Central"/>
</dbReference>
<dbReference type="GO" id="GO:0042802">
    <property type="term" value="F:identical protein binding"/>
    <property type="evidence" value="ECO:0000353"/>
    <property type="project" value="IntAct"/>
</dbReference>
<dbReference type="GO" id="GO:0007155">
    <property type="term" value="P:cell adhesion"/>
    <property type="evidence" value="ECO:0000314"/>
    <property type="project" value="EcoCyc"/>
</dbReference>
<dbReference type="GO" id="GO:0043709">
    <property type="term" value="P:cell adhesion involved in single-species biofilm formation"/>
    <property type="evidence" value="ECO:0000318"/>
    <property type="project" value="GO_Central"/>
</dbReference>
<dbReference type="FunFam" id="2.60.40.1090:FF:000001">
    <property type="entry name" value="Type-1 fimbrial major subunit"/>
    <property type="match status" value="1"/>
</dbReference>
<dbReference type="Gene3D" id="2.60.40.1090">
    <property type="entry name" value="Fimbrial-type adhesion domain"/>
    <property type="match status" value="1"/>
</dbReference>
<dbReference type="InterPro" id="IPR000259">
    <property type="entry name" value="Adhesion_dom_fimbrial"/>
</dbReference>
<dbReference type="InterPro" id="IPR036937">
    <property type="entry name" value="Adhesion_dom_fimbrial_sf"/>
</dbReference>
<dbReference type="InterPro" id="IPR008966">
    <property type="entry name" value="Adhesion_dom_sf"/>
</dbReference>
<dbReference type="InterPro" id="IPR050263">
    <property type="entry name" value="Bact_Fimbrial_Adh_Pro"/>
</dbReference>
<dbReference type="NCBIfam" id="NF011741">
    <property type="entry name" value="PRK15194.1"/>
    <property type="match status" value="1"/>
</dbReference>
<dbReference type="PANTHER" id="PTHR33420">
    <property type="entry name" value="FIMBRIAL SUBUNIT ELFA-RELATED"/>
    <property type="match status" value="1"/>
</dbReference>
<dbReference type="PANTHER" id="PTHR33420:SF12">
    <property type="entry name" value="FIMBRIN-LIKE PROTEIN FIMI-RELATED"/>
    <property type="match status" value="1"/>
</dbReference>
<dbReference type="Pfam" id="PF00419">
    <property type="entry name" value="Fimbrial"/>
    <property type="match status" value="1"/>
</dbReference>
<dbReference type="SUPFAM" id="SSF49401">
    <property type="entry name" value="Bacterial adhesins"/>
    <property type="match status" value="1"/>
</dbReference>
<keyword id="KW-0002">3D-structure</keyword>
<keyword id="KW-1015">Disulfide bond</keyword>
<keyword id="KW-0281">Fimbrium</keyword>
<keyword id="KW-1185">Reference proteome</keyword>
<keyword id="KW-0732">Signal</keyword>
<name>FIMA1_ECOLI</name>
<accession>P04128</accession>
<accession>Q2M5Z9</accession>
<reference key="1">
    <citation type="journal article" date="1985" name="J. Bacteriol.">
        <title>Nucleotide sequence of pilA, the gene encoding the structural component of type 1 pili in Escherichia coli.</title>
        <authorList>
            <person name="Orndorff P.E."/>
            <person name="Falkow S."/>
        </authorList>
    </citation>
    <scope>NUCLEOTIDE SEQUENCE [GENOMIC DNA]</scope>
</reference>
<reference key="2">
    <citation type="journal article" date="1984" name="Eur. J. Biochem.">
        <title>The fimA gene encoding the type-1 fimbrial subunit of Escherichia coli. Nucleotide sequence and primary structure of the protein.</title>
        <authorList>
            <person name="Klemm P."/>
        </authorList>
    </citation>
    <scope>NUCLEOTIDE SEQUENCE [GENOMIC DNA]</scope>
</reference>
<reference key="3">
    <citation type="journal article" date="1995" name="Nucleic Acids Res.">
        <title>Analysis of the Escherichia coli genome VI: DNA sequence of the region from 92.8 through 100 minutes.</title>
        <authorList>
            <person name="Burland V.D."/>
            <person name="Plunkett G. III"/>
            <person name="Sofia H.J."/>
            <person name="Daniels D.L."/>
            <person name="Blattner F.R."/>
        </authorList>
    </citation>
    <scope>NUCLEOTIDE SEQUENCE [LARGE SCALE GENOMIC DNA]</scope>
    <source>
        <strain>K12 / MG1655 / ATCC 47076</strain>
    </source>
</reference>
<reference key="4">
    <citation type="journal article" date="1997" name="Science">
        <title>The complete genome sequence of Escherichia coli K-12.</title>
        <authorList>
            <person name="Blattner F.R."/>
            <person name="Plunkett G. III"/>
            <person name="Bloch C.A."/>
            <person name="Perna N.T."/>
            <person name="Burland V."/>
            <person name="Riley M."/>
            <person name="Collado-Vides J."/>
            <person name="Glasner J.D."/>
            <person name="Rode C.K."/>
            <person name="Mayhew G.F."/>
            <person name="Gregor J."/>
            <person name="Davis N.W."/>
            <person name="Kirkpatrick H.A."/>
            <person name="Goeden M.A."/>
            <person name="Rose D.J."/>
            <person name="Mau B."/>
            <person name="Shao Y."/>
        </authorList>
    </citation>
    <scope>NUCLEOTIDE SEQUENCE [LARGE SCALE GENOMIC DNA]</scope>
    <source>
        <strain>K12 / MG1655 / ATCC 47076</strain>
    </source>
</reference>
<reference key="5">
    <citation type="journal article" date="2006" name="Mol. Syst. Biol.">
        <title>Highly accurate genome sequences of Escherichia coli K-12 strains MG1655 and W3110.</title>
        <authorList>
            <person name="Hayashi K."/>
            <person name="Morooka N."/>
            <person name="Yamamoto Y."/>
            <person name="Fujita K."/>
            <person name="Isono K."/>
            <person name="Choi S."/>
            <person name="Ohtsubo E."/>
            <person name="Baba T."/>
            <person name="Wanner B.L."/>
            <person name="Mori H."/>
            <person name="Horiuchi T."/>
        </authorList>
    </citation>
    <scope>NUCLEOTIDE SEQUENCE [LARGE SCALE GENOMIC DNA]</scope>
    <source>
        <strain>K12 / W3110 / ATCC 27325 / DSM 5911</strain>
    </source>
</reference>
<sequence>MKIKTLAIVVLSALSLSSTAALAAATTVNGGTVHFKGEVVNAACAVDAGSVDQTVQLGQVRTASLAQEGATSSAVGFNIQLNDCDTNVASKAAVAFLGTAIDAGHTNVLALQSSAAGSATNVGVQILDRTGAALTLDGATFSSETTLNNGTNTIPFQARYFATGAATPGAANADATFKVQYQ</sequence>
<proteinExistence type="evidence at protein level"/>
<comment type="function">
    <text>Fimbriae (also called pili), polar filaments radiating from the surface of the bacterium to a length of 0.5-1.5 micrometers and numbering 100-300 per cell, enable bacteria to colonize the epithelium of specific host organs.</text>
</comment>
<comment type="interaction">
    <interactant intactId="EBI-15697528">
        <id>P04128</id>
    </interactant>
    <interactant intactId="EBI-15697528">
        <id>P04128</id>
        <label>fimA</label>
    </interactant>
    <organismsDiffer>false</organismsDiffer>
    <experiments>2</experiments>
</comment>
<comment type="subcellular location">
    <subcellularLocation>
        <location>Fimbrium</location>
    </subcellularLocation>
</comment>
<comment type="similarity">
    <text evidence="1">Belongs to the fimbrial protein family.</text>
</comment>